<keyword id="KW-0067">ATP-binding</keyword>
<keyword id="KW-1003">Cell membrane</keyword>
<keyword id="KW-0963">Cytoplasm</keyword>
<keyword id="KW-0472">Membrane</keyword>
<keyword id="KW-0547">Nucleotide-binding</keyword>
<keyword id="KW-0653">Protein transport</keyword>
<keyword id="KW-1278">Translocase</keyword>
<keyword id="KW-0811">Translocation</keyword>
<keyword id="KW-0813">Transport</keyword>
<gene>
    <name evidence="1" type="primary">secA2</name>
    <name type="ordered locus">SACOL2671</name>
</gene>
<proteinExistence type="inferred from homology"/>
<name>SECA2_STAAC</name>
<sequence length="796" mass="90930">MKHKLDVTINELRLKSIRKIVKRINTWSDEVKSYSDDALKQKTIEFKERLASGVDTLDTLLPEAYAVAREASWRVLGMYPKEVQLIGAIVLHEGNIAEMQTGEGKTLTATMPLYLNALSGKGTYLITTNDYLAKRDFEEMQPLYEWLGLTASLGFVDIVDYEYQKGEKRNIYEHDIIYTTNGRLGFDYLIDNLADSAEGKFLPQLNYGIIDEVDSIILDAAQTPLVISGAPRLQSNLFHIVKEFVDTLIEDVHFKMKKTKKEIWLLNQGIEAAQSYFNVEDLYSEQAMVLVRNINLALRAQYLFESNVDYFVYNGDIVLIDRITGRMLPGTKLQAGLHQAIEAKEGMEVSTDKSVMATITFQNLFKLFESFSGMTATGKLGESEFFDLYSKIVVQVPTDKAIQRIDEPDKVFRSVDEKNIAMIHDIVELHETGRPVLLITRTAEAAEYFSKVLFQMDIPNNLLIAQNVAKEAQMIAEAGQIGSMTVATSMAGRGTDIKLGEGVEALGGLAVIIHEHMENSRVDRQLRGRSGRQGDPGSSCIYISLDDYLVKRWSDSNLAENNQLYSLDAQRLSQSNLFNRKVKQIVVKAQRISEEQGVKAREMANEFEKSISIQRDLVYEERNRVLEIDDAENQDFKALAKDVFEMFVNEEKVLTKSRVVEYIYQNLSFQFNKDVACVNFKDKQAVVTFLLEQFEKQLALNRKNMQSAYYYNIFVQKVFLKAIDSCWLEQVDYLQQLKASVNQRQNGQRNAIFEYHRVALDSFEVMTRNIKKRMVKNICQSMITFDKEGMPVIHFP</sequence>
<organism>
    <name type="scientific">Staphylococcus aureus (strain COL)</name>
    <dbReference type="NCBI Taxonomy" id="93062"/>
    <lineage>
        <taxon>Bacteria</taxon>
        <taxon>Bacillati</taxon>
        <taxon>Bacillota</taxon>
        <taxon>Bacilli</taxon>
        <taxon>Bacillales</taxon>
        <taxon>Staphylococcaceae</taxon>
        <taxon>Staphylococcus</taxon>
    </lineage>
</organism>
<comment type="function">
    <text evidence="1">Part of the Sec protein translocase complex. Interacts with the SecYEG preprotein conducting channel. Has a central role in coupling the hydrolysis of ATP to the transfer of proteins into and across the cell membrane, serving as an ATP-driven molecular motor driving the stepwise translocation of polypeptide chains across the membrane.</text>
</comment>
<comment type="catalytic activity">
    <reaction evidence="1">
        <text>ATP + H2O + cellular proteinSide 1 = ADP + phosphate + cellular proteinSide 2.</text>
        <dbReference type="EC" id="7.4.2.8"/>
    </reaction>
</comment>
<comment type="subunit">
    <text evidence="1">Monomer and homodimer. Part of the essential Sec protein translocation apparatus which comprises SecA, SecYEG and auxiliary proteins SecDF. Other proteins may also be involved.</text>
</comment>
<comment type="subcellular location">
    <subcellularLocation>
        <location evidence="1">Cell membrane</location>
        <topology evidence="1">Peripheral membrane protein</topology>
        <orientation evidence="1">Cytoplasmic side</orientation>
    </subcellularLocation>
    <subcellularLocation>
        <location evidence="1">Cytoplasm</location>
    </subcellularLocation>
    <text evidence="1">Distribution is 50-50.</text>
</comment>
<comment type="similarity">
    <text evidence="1">Belongs to the SecA family.</text>
</comment>
<evidence type="ECO:0000255" key="1">
    <source>
        <dbReference type="HAMAP-Rule" id="MF_01382"/>
    </source>
</evidence>
<protein>
    <recommendedName>
        <fullName evidence="1">Protein translocase subunit SecA 2</fullName>
        <ecNumber evidence="1">7.4.2.8</ecNumber>
    </recommendedName>
</protein>
<dbReference type="EC" id="7.4.2.8" evidence="1"/>
<dbReference type="EMBL" id="CP000046">
    <property type="protein sequence ID" value="AAW38669.1"/>
    <property type="molecule type" value="Genomic_DNA"/>
</dbReference>
<dbReference type="RefSeq" id="WP_000680947.1">
    <property type="nucleotide sequence ID" value="NZ_JBGOFO010000001.1"/>
</dbReference>
<dbReference type="SMR" id="Q5HCP8"/>
<dbReference type="KEGG" id="sac:SACOL2671"/>
<dbReference type="HOGENOM" id="CLU_005314_3_2_9"/>
<dbReference type="Proteomes" id="UP000000530">
    <property type="component" value="Chromosome"/>
</dbReference>
<dbReference type="GO" id="GO:0031522">
    <property type="term" value="C:cell envelope Sec protein transport complex"/>
    <property type="evidence" value="ECO:0007669"/>
    <property type="project" value="TreeGrafter"/>
</dbReference>
<dbReference type="GO" id="GO:0005829">
    <property type="term" value="C:cytosol"/>
    <property type="evidence" value="ECO:0007669"/>
    <property type="project" value="TreeGrafter"/>
</dbReference>
<dbReference type="GO" id="GO:0005886">
    <property type="term" value="C:plasma membrane"/>
    <property type="evidence" value="ECO:0007669"/>
    <property type="project" value="UniProtKB-SubCell"/>
</dbReference>
<dbReference type="GO" id="GO:0005524">
    <property type="term" value="F:ATP binding"/>
    <property type="evidence" value="ECO:0007669"/>
    <property type="project" value="UniProtKB-UniRule"/>
</dbReference>
<dbReference type="GO" id="GO:0008564">
    <property type="term" value="F:protein-exporting ATPase activity"/>
    <property type="evidence" value="ECO:0007669"/>
    <property type="project" value="UniProtKB-EC"/>
</dbReference>
<dbReference type="GO" id="GO:0065002">
    <property type="term" value="P:intracellular protein transmembrane transport"/>
    <property type="evidence" value="ECO:0007669"/>
    <property type="project" value="UniProtKB-UniRule"/>
</dbReference>
<dbReference type="GO" id="GO:0017038">
    <property type="term" value="P:protein import"/>
    <property type="evidence" value="ECO:0007669"/>
    <property type="project" value="InterPro"/>
</dbReference>
<dbReference type="GO" id="GO:0006605">
    <property type="term" value="P:protein targeting"/>
    <property type="evidence" value="ECO:0007669"/>
    <property type="project" value="UniProtKB-UniRule"/>
</dbReference>
<dbReference type="GO" id="GO:0043952">
    <property type="term" value="P:protein transport by the Sec complex"/>
    <property type="evidence" value="ECO:0007669"/>
    <property type="project" value="TreeGrafter"/>
</dbReference>
<dbReference type="CDD" id="cd17928">
    <property type="entry name" value="DEXDc_SecA"/>
    <property type="match status" value="1"/>
</dbReference>
<dbReference type="CDD" id="cd18803">
    <property type="entry name" value="SF2_C_secA"/>
    <property type="match status" value="1"/>
</dbReference>
<dbReference type="FunFam" id="3.40.50.300:FF:000429">
    <property type="entry name" value="Preprotein translocase subunit SecA"/>
    <property type="match status" value="1"/>
</dbReference>
<dbReference type="FunFam" id="3.40.50.300:FF:001575">
    <property type="entry name" value="Protein translocase subunit SecA 2"/>
    <property type="match status" value="1"/>
</dbReference>
<dbReference type="Gene3D" id="1.10.3060.10">
    <property type="entry name" value="Helical scaffold and wing domains of SecA"/>
    <property type="match status" value="1"/>
</dbReference>
<dbReference type="Gene3D" id="3.40.50.300">
    <property type="entry name" value="P-loop containing nucleotide triphosphate hydrolases"/>
    <property type="match status" value="2"/>
</dbReference>
<dbReference type="Gene3D" id="3.90.1440.10">
    <property type="entry name" value="SecA, preprotein cross-linking domain"/>
    <property type="match status" value="1"/>
</dbReference>
<dbReference type="HAMAP" id="MF_01382">
    <property type="entry name" value="SecA"/>
    <property type="match status" value="1"/>
</dbReference>
<dbReference type="InterPro" id="IPR014001">
    <property type="entry name" value="Helicase_ATP-bd"/>
</dbReference>
<dbReference type="InterPro" id="IPR001650">
    <property type="entry name" value="Helicase_C-like"/>
</dbReference>
<dbReference type="InterPro" id="IPR027417">
    <property type="entry name" value="P-loop_NTPase"/>
</dbReference>
<dbReference type="InterPro" id="IPR000185">
    <property type="entry name" value="SecA"/>
</dbReference>
<dbReference type="InterPro" id="IPR022490">
    <property type="entry name" value="SecA2"/>
</dbReference>
<dbReference type="InterPro" id="IPR011115">
    <property type="entry name" value="SecA_DEAD"/>
</dbReference>
<dbReference type="InterPro" id="IPR014018">
    <property type="entry name" value="SecA_motor_DEAD"/>
</dbReference>
<dbReference type="InterPro" id="IPR011130">
    <property type="entry name" value="SecA_preprotein_X-link_dom"/>
</dbReference>
<dbReference type="InterPro" id="IPR044722">
    <property type="entry name" value="SecA_SF2_C"/>
</dbReference>
<dbReference type="InterPro" id="IPR011116">
    <property type="entry name" value="SecA_Wing/Scaffold"/>
</dbReference>
<dbReference type="InterPro" id="IPR036266">
    <property type="entry name" value="SecA_Wing/Scaffold_sf"/>
</dbReference>
<dbReference type="InterPro" id="IPR036670">
    <property type="entry name" value="SecA_X-link_sf"/>
</dbReference>
<dbReference type="NCBIfam" id="NF006630">
    <property type="entry name" value="PRK09200.1"/>
    <property type="match status" value="1"/>
</dbReference>
<dbReference type="NCBIfam" id="TIGR03714">
    <property type="entry name" value="secA2"/>
    <property type="match status" value="1"/>
</dbReference>
<dbReference type="PANTHER" id="PTHR30612:SF0">
    <property type="entry name" value="CHLOROPLAST PROTEIN-TRANSPORTING ATPASE"/>
    <property type="match status" value="1"/>
</dbReference>
<dbReference type="PANTHER" id="PTHR30612">
    <property type="entry name" value="SECA INNER MEMBRANE COMPONENT OF SEC PROTEIN SECRETION SYSTEM"/>
    <property type="match status" value="1"/>
</dbReference>
<dbReference type="Pfam" id="PF21090">
    <property type="entry name" value="P-loop_SecA"/>
    <property type="match status" value="1"/>
</dbReference>
<dbReference type="Pfam" id="PF07517">
    <property type="entry name" value="SecA_DEAD"/>
    <property type="match status" value="1"/>
</dbReference>
<dbReference type="Pfam" id="PF01043">
    <property type="entry name" value="SecA_PP_bind"/>
    <property type="match status" value="1"/>
</dbReference>
<dbReference type="Pfam" id="PF07516">
    <property type="entry name" value="SecA_SW"/>
    <property type="match status" value="1"/>
</dbReference>
<dbReference type="PRINTS" id="PR00906">
    <property type="entry name" value="SECA"/>
</dbReference>
<dbReference type="SMART" id="SM00957">
    <property type="entry name" value="SecA_DEAD"/>
    <property type="match status" value="1"/>
</dbReference>
<dbReference type="SMART" id="SM00958">
    <property type="entry name" value="SecA_PP_bind"/>
    <property type="match status" value="1"/>
</dbReference>
<dbReference type="SUPFAM" id="SSF81886">
    <property type="entry name" value="Helical scaffold and wing domains of SecA"/>
    <property type="match status" value="1"/>
</dbReference>
<dbReference type="SUPFAM" id="SSF52540">
    <property type="entry name" value="P-loop containing nucleoside triphosphate hydrolases"/>
    <property type="match status" value="2"/>
</dbReference>
<dbReference type="SUPFAM" id="SSF81767">
    <property type="entry name" value="Pre-protein crosslinking domain of SecA"/>
    <property type="match status" value="1"/>
</dbReference>
<dbReference type="PROSITE" id="PS51196">
    <property type="entry name" value="SECA_MOTOR_DEAD"/>
    <property type="match status" value="1"/>
</dbReference>
<feature type="chain" id="PRO_0000318423" description="Protein translocase subunit SecA 2">
    <location>
        <begin position="1"/>
        <end position="796"/>
    </location>
</feature>
<feature type="binding site" evidence="1">
    <location>
        <position position="84"/>
    </location>
    <ligand>
        <name>ATP</name>
        <dbReference type="ChEBI" id="CHEBI:30616"/>
    </ligand>
</feature>
<feature type="binding site" evidence="1">
    <location>
        <begin position="102"/>
        <end position="106"/>
    </location>
    <ligand>
        <name>ATP</name>
        <dbReference type="ChEBI" id="CHEBI:30616"/>
    </ligand>
</feature>
<feature type="binding site" evidence="1">
    <location>
        <position position="496"/>
    </location>
    <ligand>
        <name>ATP</name>
        <dbReference type="ChEBI" id="CHEBI:30616"/>
    </ligand>
</feature>
<reference key="1">
    <citation type="journal article" date="2005" name="J. Bacteriol.">
        <title>Insights on evolution of virulence and resistance from the complete genome analysis of an early methicillin-resistant Staphylococcus aureus strain and a biofilm-producing methicillin-resistant Staphylococcus epidermidis strain.</title>
        <authorList>
            <person name="Gill S.R."/>
            <person name="Fouts D.E."/>
            <person name="Archer G.L."/>
            <person name="Mongodin E.F."/>
            <person name="DeBoy R.T."/>
            <person name="Ravel J."/>
            <person name="Paulsen I.T."/>
            <person name="Kolonay J.F."/>
            <person name="Brinkac L.M."/>
            <person name="Beanan M.J."/>
            <person name="Dodson R.J."/>
            <person name="Daugherty S.C."/>
            <person name="Madupu R."/>
            <person name="Angiuoli S.V."/>
            <person name="Durkin A.S."/>
            <person name="Haft D.H."/>
            <person name="Vamathevan J.J."/>
            <person name="Khouri H."/>
            <person name="Utterback T.R."/>
            <person name="Lee C."/>
            <person name="Dimitrov G."/>
            <person name="Jiang L."/>
            <person name="Qin H."/>
            <person name="Weidman J."/>
            <person name="Tran K."/>
            <person name="Kang K.H."/>
            <person name="Hance I.R."/>
            <person name="Nelson K.E."/>
            <person name="Fraser C.M."/>
        </authorList>
    </citation>
    <scope>NUCLEOTIDE SEQUENCE [LARGE SCALE GENOMIC DNA]</scope>
    <source>
        <strain>COL</strain>
    </source>
</reference>
<accession>Q5HCP8</accession>